<feature type="chain" id="PRO_1000204129" description="UvrABC system protein B">
    <location>
        <begin position="1"/>
        <end position="698"/>
    </location>
</feature>
<feature type="domain" description="Helicase ATP-binding" evidence="1">
    <location>
        <begin position="35"/>
        <end position="210"/>
    </location>
</feature>
<feature type="domain" description="Helicase C-terminal" evidence="1">
    <location>
        <begin position="438"/>
        <end position="604"/>
    </location>
</feature>
<feature type="domain" description="UVR" evidence="1">
    <location>
        <begin position="654"/>
        <end position="689"/>
    </location>
</feature>
<feature type="short sequence motif" description="Beta-hairpin">
    <location>
        <begin position="101"/>
        <end position="124"/>
    </location>
</feature>
<feature type="binding site" evidence="1">
    <location>
        <begin position="48"/>
        <end position="55"/>
    </location>
    <ligand>
        <name>ATP</name>
        <dbReference type="ChEBI" id="CHEBI:30616"/>
    </ligand>
</feature>
<keyword id="KW-0067">ATP-binding</keyword>
<keyword id="KW-0963">Cytoplasm</keyword>
<keyword id="KW-0227">DNA damage</keyword>
<keyword id="KW-0228">DNA excision</keyword>
<keyword id="KW-0234">DNA repair</keyword>
<keyword id="KW-0267">Excision nuclease</keyword>
<keyword id="KW-0347">Helicase</keyword>
<keyword id="KW-0378">Hydrolase</keyword>
<keyword id="KW-0547">Nucleotide-binding</keyword>
<keyword id="KW-1185">Reference proteome</keyword>
<keyword id="KW-0742">SOS response</keyword>
<organism>
    <name type="scientific">Beutenbergia cavernae (strain ATCC BAA-8 / DSM 12333 / CCUG 43141 / JCM 11478 / NBRC 16432 / NCIMB 13614 / HKI 0122)</name>
    <dbReference type="NCBI Taxonomy" id="471853"/>
    <lineage>
        <taxon>Bacteria</taxon>
        <taxon>Bacillati</taxon>
        <taxon>Actinomycetota</taxon>
        <taxon>Actinomycetes</taxon>
        <taxon>Micrococcales</taxon>
        <taxon>Beutenbergiaceae</taxon>
        <taxon>Beutenbergia</taxon>
    </lineage>
</organism>
<proteinExistence type="inferred from homology"/>
<protein>
    <recommendedName>
        <fullName evidence="1">UvrABC system protein B</fullName>
        <shortName evidence="1">Protein UvrB</shortName>
    </recommendedName>
    <alternativeName>
        <fullName evidence="1">Excinuclease ABC subunit B</fullName>
    </alternativeName>
</protein>
<gene>
    <name evidence="1" type="primary">uvrB</name>
    <name type="ordered locus">Bcav_2184</name>
</gene>
<reference key="1">
    <citation type="journal article" date="2009" name="Stand. Genomic Sci.">
        <title>Complete genome sequence of Beutenbergia cavernae type strain (HKI 0122).</title>
        <authorList>
            <person name="Land M."/>
            <person name="Pukall R."/>
            <person name="Abt B."/>
            <person name="Goker M."/>
            <person name="Rohde M."/>
            <person name="Glavina Del Rio T."/>
            <person name="Tice H."/>
            <person name="Copeland A."/>
            <person name="Cheng J.F."/>
            <person name="Lucas S."/>
            <person name="Chen F."/>
            <person name="Nolan M."/>
            <person name="Bruce D."/>
            <person name="Goodwin L."/>
            <person name="Pitluck S."/>
            <person name="Ivanova N."/>
            <person name="Mavromatis K."/>
            <person name="Ovchinnikova G."/>
            <person name="Pati A."/>
            <person name="Chen A."/>
            <person name="Palaniappan K."/>
            <person name="Hauser L."/>
            <person name="Chang Y.J."/>
            <person name="Jefferies C.C."/>
            <person name="Saunders E."/>
            <person name="Brettin T."/>
            <person name="Detter J.C."/>
            <person name="Han C."/>
            <person name="Chain P."/>
            <person name="Bristow J."/>
            <person name="Eisen J.A."/>
            <person name="Markowitz V."/>
            <person name="Hugenholtz P."/>
            <person name="Kyrpides N.C."/>
            <person name="Klenk H.P."/>
            <person name="Lapidus A."/>
        </authorList>
    </citation>
    <scope>NUCLEOTIDE SEQUENCE [LARGE SCALE GENOMIC DNA]</scope>
    <source>
        <strain>ATCC BAA-8 / DSM 12333 / CCUG 43141 / JCM 11478 / NBRC 16432 / NCIMB 13614 / HKI 0122</strain>
    </source>
</reference>
<evidence type="ECO:0000255" key="1">
    <source>
        <dbReference type="HAMAP-Rule" id="MF_00204"/>
    </source>
</evidence>
<sequence>MRPVTDLQRRVFPFEVISDFTPSGDQPDAIAQLTARLQAGEKDIVLLGATGTGKSATTAWLIEQVQRPTLVMAPNKTLAAQLATEFRELLPNNAVEYFVSYYDYYQPEAYVPSSDTYIEKDSSINDEVERLRHSATNSLLTRRDVVVVASVSCIYGLGTPQEYVDRMVRLRVGMQIERDDLLRQFVGMQYTRNDLSFQRGTFRVRGDTVEIIPVYEELALRIEFFGDEVEAIHTLHPLTGDVVRAEEEMYLFPATHYVAGPERMERAIAGIEVELEDRLAELEGGGRLLEAQRLRMRTTYDIEMMRQIGTCSGIENYSRHIDGREPGSPPHTLLDYFPEDFMLVIDESHQTVPQIGAMYEGDSSRKRTLVEHGFRLPSAMDNRPLRWEEFLERIGQTVYLSATPGPYELGQSDGVVEQVIRPTGLVDPEIVVKPTKGQIDDLLAEINARAERDERVLVTTLTKKMSEDLTDYLLERGVRVRYLHSEVDTLRRVELLRELRTGVFDVLVGINLLREGLDLPEVSLVAILDADKEGFLRSGTSLIQTIGRAARNVSGQVHMYADSVTPSMALAIEETNRRREKQVAYNTERGIDPEPLRKRIGDITELLAREDIDTKELLAGGYRQAGSKAPVPRKAGGDGSMRERLAGAATADLAELIQELTDQMHVAAGELQFEVAARLRDEISDLKKELRQMSAASA</sequence>
<comment type="function">
    <text evidence="1">The UvrABC repair system catalyzes the recognition and processing of DNA lesions. A damage recognition complex composed of 2 UvrA and 2 UvrB subunits scans DNA for abnormalities. Upon binding of the UvrA(2)B(2) complex to a putative damaged site, the DNA wraps around one UvrB monomer. DNA wrap is dependent on ATP binding by UvrB and probably causes local melting of the DNA helix, facilitating insertion of UvrB beta-hairpin between the DNA strands. Then UvrB probes one DNA strand for the presence of a lesion. If a lesion is found the UvrA subunits dissociate and the UvrB-DNA preincision complex is formed. This complex is subsequently bound by UvrC and the second UvrB is released. If no lesion is found, the DNA wraps around the other UvrB subunit that will check the other stand for damage.</text>
</comment>
<comment type="subunit">
    <text evidence="1">Forms a heterotetramer with UvrA during the search for lesions. Interacts with UvrC in an incision complex.</text>
</comment>
<comment type="subcellular location">
    <subcellularLocation>
        <location evidence="1">Cytoplasm</location>
    </subcellularLocation>
</comment>
<comment type="domain">
    <text evidence="1">The beta-hairpin motif is involved in DNA binding.</text>
</comment>
<comment type="similarity">
    <text evidence="1">Belongs to the UvrB family.</text>
</comment>
<name>UVRB_BEUC1</name>
<accession>C5BV49</accession>
<dbReference type="EMBL" id="CP001618">
    <property type="protein sequence ID" value="ACQ80436.1"/>
    <property type="molecule type" value="Genomic_DNA"/>
</dbReference>
<dbReference type="RefSeq" id="WP_015882676.1">
    <property type="nucleotide sequence ID" value="NC_012669.1"/>
</dbReference>
<dbReference type="SMR" id="C5BV49"/>
<dbReference type="STRING" id="471853.Bcav_2184"/>
<dbReference type="KEGG" id="bcv:Bcav_2184"/>
<dbReference type="eggNOG" id="COG0556">
    <property type="taxonomic scope" value="Bacteria"/>
</dbReference>
<dbReference type="HOGENOM" id="CLU_009621_2_1_11"/>
<dbReference type="OrthoDB" id="9806651at2"/>
<dbReference type="Proteomes" id="UP000007962">
    <property type="component" value="Chromosome"/>
</dbReference>
<dbReference type="GO" id="GO:0005737">
    <property type="term" value="C:cytoplasm"/>
    <property type="evidence" value="ECO:0007669"/>
    <property type="project" value="UniProtKB-SubCell"/>
</dbReference>
<dbReference type="GO" id="GO:0009380">
    <property type="term" value="C:excinuclease repair complex"/>
    <property type="evidence" value="ECO:0007669"/>
    <property type="project" value="InterPro"/>
</dbReference>
<dbReference type="GO" id="GO:0005524">
    <property type="term" value="F:ATP binding"/>
    <property type="evidence" value="ECO:0007669"/>
    <property type="project" value="UniProtKB-UniRule"/>
</dbReference>
<dbReference type="GO" id="GO:0016887">
    <property type="term" value="F:ATP hydrolysis activity"/>
    <property type="evidence" value="ECO:0007669"/>
    <property type="project" value="InterPro"/>
</dbReference>
<dbReference type="GO" id="GO:0003677">
    <property type="term" value="F:DNA binding"/>
    <property type="evidence" value="ECO:0007669"/>
    <property type="project" value="UniProtKB-UniRule"/>
</dbReference>
<dbReference type="GO" id="GO:0009381">
    <property type="term" value="F:excinuclease ABC activity"/>
    <property type="evidence" value="ECO:0007669"/>
    <property type="project" value="UniProtKB-UniRule"/>
</dbReference>
<dbReference type="GO" id="GO:0004386">
    <property type="term" value="F:helicase activity"/>
    <property type="evidence" value="ECO:0007669"/>
    <property type="project" value="UniProtKB-KW"/>
</dbReference>
<dbReference type="GO" id="GO:0006289">
    <property type="term" value="P:nucleotide-excision repair"/>
    <property type="evidence" value="ECO:0007669"/>
    <property type="project" value="UniProtKB-UniRule"/>
</dbReference>
<dbReference type="GO" id="GO:0009432">
    <property type="term" value="P:SOS response"/>
    <property type="evidence" value="ECO:0007669"/>
    <property type="project" value="UniProtKB-UniRule"/>
</dbReference>
<dbReference type="CDD" id="cd17916">
    <property type="entry name" value="DEXHc_UvrB"/>
    <property type="match status" value="1"/>
</dbReference>
<dbReference type="CDD" id="cd18790">
    <property type="entry name" value="SF2_C_UvrB"/>
    <property type="match status" value="1"/>
</dbReference>
<dbReference type="FunFam" id="4.10.860.10:FF:000009">
    <property type="entry name" value="UvrABC system protein B"/>
    <property type="match status" value="1"/>
</dbReference>
<dbReference type="Gene3D" id="3.40.50.300">
    <property type="entry name" value="P-loop containing nucleotide triphosphate hydrolases"/>
    <property type="match status" value="3"/>
</dbReference>
<dbReference type="Gene3D" id="4.10.860.10">
    <property type="entry name" value="UVR domain"/>
    <property type="match status" value="1"/>
</dbReference>
<dbReference type="HAMAP" id="MF_00204">
    <property type="entry name" value="UvrB"/>
    <property type="match status" value="1"/>
</dbReference>
<dbReference type="InterPro" id="IPR006935">
    <property type="entry name" value="Helicase/UvrB_N"/>
</dbReference>
<dbReference type="InterPro" id="IPR014001">
    <property type="entry name" value="Helicase_ATP-bd"/>
</dbReference>
<dbReference type="InterPro" id="IPR001650">
    <property type="entry name" value="Helicase_C-like"/>
</dbReference>
<dbReference type="InterPro" id="IPR027417">
    <property type="entry name" value="P-loop_NTPase"/>
</dbReference>
<dbReference type="InterPro" id="IPR001943">
    <property type="entry name" value="UVR_dom"/>
</dbReference>
<dbReference type="InterPro" id="IPR036876">
    <property type="entry name" value="UVR_dom_sf"/>
</dbReference>
<dbReference type="InterPro" id="IPR004807">
    <property type="entry name" value="UvrB"/>
</dbReference>
<dbReference type="InterPro" id="IPR041471">
    <property type="entry name" value="UvrB_inter"/>
</dbReference>
<dbReference type="InterPro" id="IPR024759">
    <property type="entry name" value="UvrB_YAD/RRR_dom"/>
</dbReference>
<dbReference type="NCBIfam" id="NF003673">
    <property type="entry name" value="PRK05298.1"/>
    <property type="match status" value="1"/>
</dbReference>
<dbReference type="NCBIfam" id="TIGR00631">
    <property type="entry name" value="uvrb"/>
    <property type="match status" value="1"/>
</dbReference>
<dbReference type="PANTHER" id="PTHR24029">
    <property type="entry name" value="UVRABC SYSTEM PROTEIN B"/>
    <property type="match status" value="1"/>
</dbReference>
<dbReference type="PANTHER" id="PTHR24029:SF0">
    <property type="entry name" value="UVRABC SYSTEM PROTEIN B"/>
    <property type="match status" value="1"/>
</dbReference>
<dbReference type="Pfam" id="PF00271">
    <property type="entry name" value="Helicase_C"/>
    <property type="match status" value="1"/>
</dbReference>
<dbReference type="Pfam" id="PF04851">
    <property type="entry name" value="ResIII"/>
    <property type="match status" value="1"/>
</dbReference>
<dbReference type="Pfam" id="PF02151">
    <property type="entry name" value="UVR"/>
    <property type="match status" value="1"/>
</dbReference>
<dbReference type="Pfam" id="PF12344">
    <property type="entry name" value="UvrB"/>
    <property type="match status" value="1"/>
</dbReference>
<dbReference type="Pfam" id="PF17757">
    <property type="entry name" value="UvrB_inter"/>
    <property type="match status" value="1"/>
</dbReference>
<dbReference type="SMART" id="SM00487">
    <property type="entry name" value="DEXDc"/>
    <property type="match status" value="1"/>
</dbReference>
<dbReference type="SMART" id="SM00490">
    <property type="entry name" value="HELICc"/>
    <property type="match status" value="1"/>
</dbReference>
<dbReference type="SUPFAM" id="SSF46600">
    <property type="entry name" value="C-terminal UvrC-binding domain of UvrB"/>
    <property type="match status" value="1"/>
</dbReference>
<dbReference type="SUPFAM" id="SSF52540">
    <property type="entry name" value="P-loop containing nucleoside triphosphate hydrolases"/>
    <property type="match status" value="2"/>
</dbReference>
<dbReference type="PROSITE" id="PS51192">
    <property type="entry name" value="HELICASE_ATP_BIND_1"/>
    <property type="match status" value="1"/>
</dbReference>
<dbReference type="PROSITE" id="PS51194">
    <property type="entry name" value="HELICASE_CTER"/>
    <property type="match status" value="1"/>
</dbReference>
<dbReference type="PROSITE" id="PS50151">
    <property type="entry name" value="UVR"/>
    <property type="match status" value="1"/>
</dbReference>